<comment type="subcellular location">
    <subcellularLocation>
        <location evidence="1">Secreted</location>
    </subcellularLocation>
</comment>
<comment type="tissue specificity">
    <text evidence="4">Expressed by the skin glands.</text>
</comment>
<comment type="mass spectrometry" mass="1657.0" method="MALDI" evidence="1"/>
<comment type="similarity">
    <text evidence="3">Belongs to the gastrin/cholecystokinin family.</text>
</comment>
<reference evidence="3" key="1">
    <citation type="journal article" date="2016" name="Comp. Biochem. Physiol.">
        <title>Peptidomic analysis of the extensive array of host-defense peptides in skin secretions of the dodecaploid frog Xenopus ruwenzoriensis (Pipidae).</title>
        <authorList>
            <person name="Coquet L."/>
            <person name="Kolodziejek J."/>
            <person name="Jouenne T."/>
            <person name="Nowotny N."/>
            <person name="King J.D."/>
            <person name="Conlon J.M."/>
        </authorList>
    </citation>
    <scope>PROTEIN SEQUENCE</scope>
    <scope>SUBCELLULAR LOCATION</scope>
    <scope>MASS SPECTROMETRY</scope>
    <scope>AMIDATION AT LEU-17</scope>
    <source>
        <tissue evidence="2">Skin secretion</tissue>
    </source>
</reference>
<feature type="peptide" id="PRO_0000440920" description="Caerulein precursor fragment-related peptide R1" evidence="1">
    <location>
        <begin position="1"/>
        <end position="17"/>
    </location>
</feature>
<feature type="modified residue" description="Leucine amide" evidence="1">
    <location>
        <position position="17"/>
    </location>
</feature>
<evidence type="ECO:0000269" key="1">
    <source>
    </source>
</evidence>
<evidence type="ECO:0000303" key="2">
    <source>
    </source>
</evidence>
<evidence type="ECO:0000305" key="3"/>
<evidence type="ECO:0000305" key="4">
    <source>
    </source>
</evidence>
<organism evidence="2">
    <name type="scientific">Xenopus ruwenzoriensis</name>
    <name type="common">Uganda clawed frog</name>
    <dbReference type="NCBI Taxonomy" id="105430"/>
    <lineage>
        <taxon>Eukaryota</taxon>
        <taxon>Metazoa</taxon>
        <taxon>Chordata</taxon>
        <taxon>Craniata</taxon>
        <taxon>Vertebrata</taxon>
        <taxon>Euteleostomi</taxon>
        <taxon>Amphibia</taxon>
        <taxon>Batrachia</taxon>
        <taxon>Anura</taxon>
        <taxon>Pipoidea</taxon>
        <taxon>Pipidae</taxon>
        <taxon>Xenopodinae</taxon>
        <taxon>Xenopus</taxon>
        <taxon>Xenopus</taxon>
    </lineage>
</organism>
<proteinExistence type="evidence at protein level"/>
<keyword id="KW-0027">Amidation</keyword>
<keyword id="KW-0878">Amphibian defense peptide</keyword>
<keyword id="KW-0903">Direct protein sequencing</keyword>
<keyword id="KW-0964">Secreted</keyword>
<accession>C0HKN3</accession>
<sequence length="17" mass="1658">GFGSVLGKALKIGANLL</sequence>
<protein>
    <recommendedName>
        <fullName evidence="2">Caerulein precursor fragment-related peptide R1</fullName>
    </recommendedName>
    <alternativeName>
        <fullName evidence="2">CPF-RP-R1</fullName>
    </alternativeName>
</protein>
<name>CRR1_XENRU</name>
<dbReference type="GO" id="GO:0005576">
    <property type="term" value="C:extracellular region"/>
    <property type="evidence" value="ECO:0007669"/>
    <property type="project" value="UniProtKB-SubCell"/>
</dbReference>
<dbReference type="GO" id="GO:0006952">
    <property type="term" value="P:defense response"/>
    <property type="evidence" value="ECO:0007669"/>
    <property type="project" value="UniProtKB-KW"/>
</dbReference>